<proteinExistence type="evidence at protein level"/>
<gene>
    <name evidence="8" type="primary">Nudt3</name>
    <name type="synonym">Dipp</name>
    <name type="synonym">Dipp1</name>
</gene>
<accession>Q9JI46</accession>
<accession>B2KF68</accession>
<accession>Q6PG02</accession>
<accession>Q8BV71</accession>
<organism>
    <name type="scientific">Mus musculus</name>
    <name type="common">Mouse</name>
    <dbReference type="NCBI Taxonomy" id="10090"/>
    <lineage>
        <taxon>Eukaryota</taxon>
        <taxon>Metazoa</taxon>
        <taxon>Chordata</taxon>
        <taxon>Craniata</taxon>
        <taxon>Vertebrata</taxon>
        <taxon>Euteleostomi</taxon>
        <taxon>Mammalia</taxon>
        <taxon>Eutheria</taxon>
        <taxon>Euarchontoglires</taxon>
        <taxon>Glires</taxon>
        <taxon>Rodentia</taxon>
        <taxon>Myomorpha</taxon>
        <taxon>Muroidea</taxon>
        <taxon>Muridae</taxon>
        <taxon>Murinae</taxon>
        <taxon>Mus</taxon>
        <taxon>Mus</taxon>
    </lineage>
</organism>
<protein>
    <recommendedName>
        <fullName evidence="7">Diphosphoinositol polyphosphate phosphohydrolase 1</fullName>
        <shortName>DIPP-1</shortName>
        <shortName>muDIPP1</shortName>
        <ecNumber evidence="5">3.6.1.52</ecNumber>
    </recommendedName>
    <alternativeName>
        <fullName>Diadenosine hexaphosphate hydrolase</fullName>
        <shortName>Ap6A hydrolase</shortName>
        <ecNumber evidence="2">3.6.1.61</ecNumber>
    </alternativeName>
    <alternativeName>
        <fullName>Endopolyphosphatase</fullName>
        <ecNumber evidence="2">3.6.1.10</ecNumber>
    </alternativeName>
    <alternativeName>
        <fullName>Nucleoside diphosphate-linked moiety X motif 3</fullName>
        <shortName>Nudix motif 3</shortName>
    </alternativeName>
    <alternativeName>
        <fullName>m7GpppN-mRNA hydrolase</fullName>
        <ecNumber evidence="6">3.6.1.62</ecNumber>
    </alternativeName>
    <alternativeName>
        <fullName>m7GpppX diphosphatase</fullName>
        <ecNumber evidence="6">3.6.1.59</ecNumber>
    </alternativeName>
</protein>
<reference key="1">
    <citation type="journal article" date="2004" name="Cell. Signal.">
        <title>Ectopic expression of murine diphosphoinositol polyphosphate phosphohydrolase 1 attenuates signaling through the ERK1/2 pathway.</title>
        <authorList>
            <person name="Chu C."/>
            <person name="Alapat D."/>
            <person name="Wen X."/>
            <person name="Timo K."/>
            <person name="Burstein D."/>
            <person name="Lisanti M."/>
            <person name="Shears S."/>
            <person name="Kohtz D.S."/>
        </authorList>
    </citation>
    <scope>NUCLEOTIDE SEQUENCE [MRNA]</scope>
    <scope>FUNCTION</scope>
    <scope>CATALYTIC ACTIVITY</scope>
    <scope>TISSUE SPECIFICITY</scope>
    <scope>MUTAGENESIS OF GLU-70</scope>
    <source>
        <tissue>Heart</tissue>
    </source>
</reference>
<reference key="2">
    <citation type="journal article" date="2009" name="PLoS Biol.">
        <title>Lineage-specific biology revealed by a finished genome assembly of the mouse.</title>
        <authorList>
            <person name="Church D.M."/>
            <person name="Goodstadt L."/>
            <person name="Hillier L.W."/>
            <person name="Zody M.C."/>
            <person name="Goldstein S."/>
            <person name="She X."/>
            <person name="Bult C.J."/>
            <person name="Agarwala R."/>
            <person name="Cherry J.L."/>
            <person name="DiCuccio M."/>
            <person name="Hlavina W."/>
            <person name="Kapustin Y."/>
            <person name="Meric P."/>
            <person name="Maglott D."/>
            <person name="Birtle Z."/>
            <person name="Marques A.C."/>
            <person name="Graves T."/>
            <person name="Zhou S."/>
            <person name="Teague B."/>
            <person name="Potamousis K."/>
            <person name="Churas C."/>
            <person name="Place M."/>
            <person name="Herschleb J."/>
            <person name="Runnheim R."/>
            <person name="Forrest D."/>
            <person name="Amos-Landgraf J."/>
            <person name="Schwartz D.C."/>
            <person name="Cheng Z."/>
            <person name="Lindblad-Toh K."/>
            <person name="Eichler E.E."/>
            <person name="Ponting C.P."/>
        </authorList>
    </citation>
    <scope>NUCLEOTIDE SEQUENCE [LARGE SCALE GENOMIC DNA]</scope>
    <source>
        <strain>C57BL/6J</strain>
    </source>
</reference>
<reference key="3">
    <citation type="journal article" date="2004" name="Genome Res.">
        <title>The status, quality, and expansion of the NIH full-length cDNA project: the Mammalian Gene Collection (MGC).</title>
        <authorList>
            <consortium name="The MGC Project Team"/>
        </authorList>
    </citation>
    <scope>NUCLEOTIDE SEQUENCE [LARGE SCALE MRNA]</scope>
    <source>
        <strain>C57BL/6J</strain>
        <strain>FVB/N</strain>
        <tissue>Brain</tissue>
        <tissue>Mammary tumor</tissue>
    </source>
</reference>
<reference key="4">
    <citation type="journal article" date="2005" name="Science">
        <title>The transcriptional landscape of the mammalian genome.</title>
        <authorList>
            <person name="Carninci P."/>
            <person name="Kasukawa T."/>
            <person name="Katayama S."/>
            <person name="Gough J."/>
            <person name="Frith M.C."/>
            <person name="Maeda N."/>
            <person name="Oyama R."/>
            <person name="Ravasi T."/>
            <person name="Lenhard B."/>
            <person name="Wells C."/>
            <person name="Kodzius R."/>
            <person name="Shimokawa K."/>
            <person name="Bajic V.B."/>
            <person name="Brenner S.E."/>
            <person name="Batalov S."/>
            <person name="Forrest A.R."/>
            <person name="Zavolan M."/>
            <person name="Davis M.J."/>
            <person name="Wilming L.G."/>
            <person name="Aidinis V."/>
            <person name="Allen J.E."/>
            <person name="Ambesi-Impiombato A."/>
            <person name="Apweiler R."/>
            <person name="Aturaliya R.N."/>
            <person name="Bailey T.L."/>
            <person name="Bansal M."/>
            <person name="Baxter L."/>
            <person name="Beisel K.W."/>
            <person name="Bersano T."/>
            <person name="Bono H."/>
            <person name="Chalk A.M."/>
            <person name="Chiu K.P."/>
            <person name="Choudhary V."/>
            <person name="Christoffels A."/>
            <person name="Clutterbuck D.R."/>
            <person name="Crowe M.L."/>
            <person name="Dalla E."/>
            <person name="Dalrymple B.P."/>
            <person name="de Bono B."/>
            <person name="Della Gatta G."/>
            <person name="di Bernardo D."/>
            <person name="Down T."/>
            <person name="Engstrom P."/>
            <person name="Fagiolini M."/>
            <person name="Faulkner G."/>
            <person name="Fletcher C.F."/>
            <person name="Fukushima T."/>
            <person name="Furuno M."/>
            <person name="Futaki S."/>
            <person name="Gariboldi M."/>
            <person name="Georgii-Hemming P."/>
            <person name="Gingeras T.R."/>
            <person name="Gojobori T."/>
            <person name="Green R.E."/>
            <person name="Gustincich S."/>
            <person name="Harbers M."/>
            <person name="Hayashi Y."/>
            <person name="Hensch T.K."/>
            <person name="Hirokawa N."/>
            <person name="Hill D."/>
            <person name="Huminiecki L."/>
            <person name="Iacono M."/>
            <person name="Ikeo K."/>
            <person name="Iwama A."/>
            <person name="Ishikawa T."/>
            <person name="Jakt M."/>
            <person name="Kanapin A."/>
            <person name="Katoh M."/>
            <person name="Kawasawa Y."/>
            <person name="Kelso J."/>
            <person name="Kitamura H."/>
            <person name="Kitano H."/>
            <person name="Kollias G."/>
            <person name="Krishnan S.P."/>
            <person name="Kruger A."/>
            <person name="Kummerfeld S.K."/>
            <person name="Kurochkin I.V."/>
            <person name="Lareau L.F."/>
            <person name="Lazarevic D."/>
            <person name="Lipovich L."/>
            <person name="Liu J."/>
            <person name="Liuni S."/>
            <person name="McWilliam S."/>
            <person name="Madan Babu M."/>
            <person name="Madera M."/>
            <person name="Marchionni L."/>
            <person name="Matsuda H."/>
            <person name="Matsuzawa S."/>
            <person name="Miki H."/>
            <person name="Mignone F."/>
            <person name="Miyake S."/>
            <person name="Morris K."/>
            <person name="Mottagui-Tabar S."/>
            <person name="Mulder N."/>
            <person name="Nakano N."/>
            <person name="Nakauchi H."/>
            <person name="Ng P."/>
            <person name="Nilsson R."/>
            <person name="Nishiguchi S."/>
            <person name="Nishikawa S."/>
            <person name="Nori F."/>
            <person name="Ohara O."/>
            <person name="Okazaki Y."/>
            <person name="Orlando V."/>
            <person name="Pang K.C."/>
            <person name="Pavan W.J."/>
            <person name="Pavesi G."/>
            <person name="Pesole G."/>
            <person name="Petrovsky N."/>
            <person name="Piazza S."/>
            <person name="Reed J."/>
            <person name="Reid J.F."/>
            <person name="Ring B.Z."/>
            <person name="Ringwald M."/>
            <person name="Rost B."/>
            <person name="Ruan Y."/>
            <person name="Salzberg S.L."/>
            <person name="Sandelin A."/>
            <person name="Schneider C."/>
            <person name="Schoenbach C."/>
            <person name="Sekiguchi K."/>
            <person name="Semple C.A."/>
            <person name="Seno S."/>
            <person name="Sessa L."/>
            <person name="Sheng Y."/>
            <person name="Shibata Y."/>
            <person name="Shimada H."/>
            <person name="Shimada K."/>
            <person name="Silva D."/>
            <person name="Sinclair B."/>
            <person name="Sperling S."/>
            <person name="Stupka E."/>
            <person name="Sugiura K."/>
            <person name="Sultana R."/>
            <person name="Takenaka Y."/>
            <person name="Taki K."/>
            <person name="Tammoja K."/>
            <person name="Tan S.L."/>
            <person name="Tang S."/>
            <person name="Taylor M.S."/>
            <person name="Tegner J."/>
            <person name="Teichmann S.A."/>
            <person name="Ueda H.R."/>
            <person name="van Nimwegen E."/>
            <person name="Verardo R."/>
            <person name="Wei C.L."/>
            <person name="Yagi K."/>
            <person name="Yamanishi H."/>
            <person name="Zabarovsky E."/>
            <person name="Zhu S."/>
            <person name="Zimmer A."/>
            <person name="Hide W."/>
            <person name="Bult C."/>
            <person name="Grimmond S.M."/>
            <person name="Teasdale R.D."/>
            <person name="Liu E.T."/>
            <person name="Brusic V."/>
            <person name="Quackenbush J."/>
            <person name="Wahlestedt C."/>
            <person name="Mattick J.S."/>
            <person name="Hume D.A."/>
            <person name="Kai C."/>
            <person name="Sasaki D."/>
            <person name="Tomaru Y."/>
            <person name="Fukuda S."/>
            <person name="Kanamori-Katayama M."/>
            <person name="Suzuki M."/>
            <person name="Aoki J."/>
            <person name="Arakawa T."/>
            <person name="Iida J."/>
            <person name="Imamura K."/>
            <person name="Itoh M."/>
            <person name="Kato T."/>
            <person name="Kawaji H."/>
            <person name="Kawagashira N."/>
            <person name="Kawashima T."/>
            <person name="Kojima M."/>
            <person name="Kondo S."/>
            <person name="Konno H."/>
            <person name="Nakano K."/>
            <person name="Ninomiya N."/>
            <person name="Nishio T."/>
            <person name="Okada M."/>
            <person name="Plessy C."/>
            <person name="Shibata K."/>
            <person name="Shiraki T."/>
            <person name="Suzuki S."/>
            <person name="Tagami M."/>
            <person name="Waki K."/>
            <person name="Watahiki A."/>
            <person name="Okamura-Oho Y."/>
            <person name="Suzuki H."/>
            <person name="Kawai J."/>
            <person name="Hayashizaki Y."/>
        </authorList>
    </citation>
    <scope>NUCLEOTIDE SEQUENCE [LARGE SCALE MRNA] OF 81-168</scope>
    <source>
        <strain>C57BL/6J</strain>
        <tissue>Spinal cord</tissue>
    </source>
</reference>
<reference key="5">
    <citation type="journal article" date="2010" name="Cell">
        <title>A tissue-specific atlas of mouse protein phosphorylation and expression.</title>
        <authorList>
            <person name="Huttlin E.L."/>
            <person name="Jedrychowski M.P."/>
            <person name="Elias J.E."/>
            <person name="Goswami T."/>
            <person name="Rad R."/>
            <person name="Beausoleil S.A."/>
            <person name="Villen J."/>
            <person name="Haas W."/>
            <person name="Sowa M.E."/>
            <person name="Gygi S.P."/>
        </authorList>
    </citation>
    <scope>IDENTIFICATION BY MASS SPECTROMETRY [LARGE SCALE ANALYSIS]</scope>
    <source>
        <tissue>Brain</tissue>
        <tissue>Heart</tissue>
        <tissue>Kidney</tissue>
        <tissue>Liver</tissue>
        <tissue>Lung</tissue>
        <tissue>Pancreas</tissue>
        <tissue>Spleen</tissue>
        <tissue>Testis</tissue>
    </source>
</reference>
<reference key="6">
    <citation type="journal article" date="2013" name="RNA">
        <title>Multiple Nudix family proteins possess mRNA decapping activity.</title>
        <authorList>
            <person name="Song M.G."/>
            <person name="Bail S."/>
            <person name="Kiledjian M."/>
        </authorList>
    </citation>
    <scope>FUNCTION</scope>
    <scope>CATALYTIC ACTIVITY</scope>
</reference>
<evidence type="ECO:0000250" key="1"/>
<evidence type="ECO:0000250" key="2">
    <source>
        <dbReference type="UniProtKB" id="O95989"/>
    </source>
</evidence>
<evidence type="ECO:0000250" key="3">
    <source>
        <dbReference type="UniProtKB" id="Q566C7"/>
    </source>
</evidence>
<evidence type="ECO:0000255" key="4">
    <source>
        <dbReference type="PROSITE-ProRule" id="PRU00794"/>
    </source>
</evidence>
<evidence type="ECO:0000269" key="5">
    <source>
    </source>
</evidence>
<evidence type="ECO:0000269" key="6">
    <source>
    </source>
</evidence>
<evidence type="ECO:0000305" key="7"/>
<evidence type="ECO:0000312" key="8">
    <source>
        <dbReference type="MGI" id="MGI:1928484"/>
    </source>
</evidence>
<dbReference type="EC" id="3.6.1.52" evidence="5"/>
<dbReference type="EC" id="3.6.1.61" evidence="2"/>
<dbReference type="EC" id="3.6.1.10" evidence="2"/>
<dbReference type="EC" id="3.6.1.62" evidence="6"/>
<dbReference type="EC" id="3.6.1.59" evidence="6"/>
<dbReference type="EMBL" id="AF264064">
    <property type="protein sequence ID" value="AAF74761.1"/>
    <property type="molecule type" value="mRNA"/>
</dbReference>
<dbReference type="EMBL" id="CT027568">
    <property type="status" value="NOT_ANNOTATED_CDS"/>
    <property type="molecule type" value="Genomic_DNA"/>
</dbReference>
<dbReference type="EMBL" id="BC016534">
    <property type="protein sequence ID" value="AAH16534.1"/>
    <property type="molecule type" value="mRNA"/>
</dbReference>
<dbReference type="EMBL" id="BC046805">
    <property type="protein sequence ID" value="AAH46805.1"/>
    <property type="molecule type" value="mRNA"/>
</dbReference>
<dbReference type="EMBL" id="BC057331">
    <property type="protein sequence ID" value="AAH57331.1"/>
    <property type="status" value="ALT_SEQ"/>
    <property type="molecule type" value="mRNA"/>
</dbReference>
<dbReference type="EMBL" id="AK079658">
    <property type="protein sequence ID" value="BAC37717.1"/>
    <property type="molecule type" value="mRNA"/>
</dbReference>
<dbReference type="CCDS" id="CCDS28566.1"/>
<dbReference type="RefSeq" id="NP_062811.1">
    <property type="nucleotide sequence ID" value="NM_019837.2"/>
</dbReference>
<dbReference type="SMR" id="Q9JI46"/>
<dbReference type="BioGRID" id="207960">
    <property type="interactions" value="5"/>
</dbReference>
<dbReference type="FunCoup" id="Q9JI46">
    <property type="interactions" value="3871"/>
</dbReference>
<dbReference type="STRING" id="10090.ENSMUSP00000025050"/>
<dbReference type="GlyGen" id="Q9JI46">
    <property type="glycosylation" value="3 sites, 1 N-linked glycan (1 site), 1 O-linked glycan (2 sites)"/>
</dbReference>
<dbReference type="iPTMnet" id="Q9JI46"/>
<dbReference type="PhosphoSitePlus" id="Q9JI46"/>
<dbReference type="SwissPalm" id="Q9JI46"/>
<dbReference type="jPOST" id="Q9JI46"/>
<dbReference type="PaxDb" id="10090-ENSMUSP00000025050"/>
<dbReference type="ProteomicsDB" id="293813"/>
<dbReference type="Pumba" id="Q9JI46"/>
<dbReference type="Antibodypedia" id="69618">
    <property type="antibodies" value="54 antibodies from 20 providers"/>
</dbReference>
<dbReference type="DNASU" id="56409"/>
<dbReference type="Ensembl" id="ENSMUST00000025050.13">
    <property type="protein sequence ID" value="ENSMUSP00000025050.6"/>
    <property type="gene ID" value="ENSMUSG00000024213.15"/>
</dbReference>
<dbReference type="GeneID" id="56409"/>
<dbReference type="KEGG" id="mmu:56409"/>
<dbReference type="UCSC" id="uc008bpg.2">
    <property type="organism name" value="mouse"/>
</dbReference>
<dbReference type="AGR" id="MGI:1928484"/>
<dbReference type="CTD" id="11165"/>
<dbReference type="MGI" id="MGI:1928484">
    <property type="gene designation" value="Nudt3"/>
</dbReference>
<dbReference type="VEuPathDB" id="HostDB:ENSMUSG00000024213"/>
<dbReference type="eggNOG" id="KOG2839">
    <property type="taxonomic scope" value="Eukaryota"/>
</dbReference>
<dbReference type="GeneTree" id="ENSGT00940000157882"/>
<dbReference type="HOGENOM" id="CLU_037162_1_0_1"/>
<dbReference type="InParanoid" id="Q9JI46"/>
<dbReference type="OMA" id="WHEDKLN"/>
<dbReference type="OrthoDB" id="2011998at2759"/>
<dbReference type="PhylomeDB" id="Q9JI46"/>
<dbReference type="TreeFam" id="TF106349"/>
<dbReference type="Reactome" id="R-MMU-1855167">
    <property type="pathway name" value="Synthesis of pyrophosphates in the cytosol"/>
</dbReference>
<dbReference type="BioGRID-ORCS" id="56409">
    <property type="hits" value="5 hits in 79 CRISPR screens"/>
</dbReference>
<dbReference type="ChiTaRS" id="Nudt3">
    <property type="organism name" value="mouse"/>
</dbReference>
<dbReference type="PRO" id="PR:Q9JI46"/>
<dbReference type="Proteomes" id="UP000000589">
    <property type="component" value="Chromosome 17"/>
</dbReference>
<dbReference type="RNAct" id="Q9JI46">
    <property type="molecule type" value="protein"/>
</dbReference>
<dbReference type="Bgee" id="ENSMUSG00000024213">
    <property type="expression patterns" value="Expressed in retinal neural layer and 267 other cell types or tissues"/>
</dbReference>
<dbReference type="ExpressionAtlas" id="Q9JI46">
    <property type="expression patterns" value="baseline and differential"/>
</dbReference>
<dbReference type="GO" id="GO:0005737">
    <property type="term" value="C:cytoplasm"/>
    <property type="evidence" value="ECO:0000250"/>
    <property type="project" value="UniProtKB"/>
</dbReference>
<dbReference type="GO" id="GO:0005829">
    <property type="term" value="C:cytosol"/>
    <property type="evidence" value="ECO:0007669"/>
    <property type="project" value="Ensembl"/>
</dbReference>
<dbReference type="GO" id="GO:0098978">
    <property type="term" value="C:glutamatergic synapse"/>
    <property type="evidence" value="ECO:0000314"/>
    <property type="project" value="SynGO"/>
</dbReference>
<dbReference type="GO" id="GO:0005634">
    <property type="term" value="C:nucleus"/>
    <property type="evidence" value="ECO:0000250"/>
    <property type="project" value="UniProtKB"/>
</dbReference>
<dbReference type="GO" id="GO:0045202">
    <property type="term" value="C:synapse"/>
    <property type="evidence" value="ECO:0000314"/>
    <property type="project" value="SynGO"/>
</dbReference>
<dbReference type="GO" id="GO:0140932">
    <property type="term" value="F:5'-(N(7)-methyl 5'-triphosphoguanosine)-[mRNA] diphosphatase activity"/>
    <property type="evidence" value="ECO:0000314"/>
    <property type="project" value="UniProtKB"/>
</dbReference>
<dbReference type="GO" id="GO:0140933">
    <property type="term" value="F:5'-(N(7)-methylguanosine 5'-triphospho)-[mRNA] hydrolase activity"/>
    <property type="evidence" value="ECO:0000314"/>
    <property type="project" value="UniProtKB"/>
</dbReference>
<dbReference type="GO" id="GO:0008486">
    <property type="term" value="F:diphosphoinositol-polyphosphate diphosphatase activity"/>
    <property type="evidence" value="ECO:0000250"/>
    <property type="project" value="UniProtKB"/>
</dbReference>
<dbReference type="GO" id="GO:0000298">
    <property type="term" value="F:endopolyphosphatase activity"/>
    <property type="evidence" value="ECO:0007669"/>
    <property type="project" value="Ensembl"/>
</dbReference>
<dbReference type="GO" id="GO:0052840">
    <property type="term" value="F:inositol diphosphate tetrakisphosphate diphosphatase activity"/>
    <property type="evidence" value="ECO:0000250"/>
    <property type="project" value="UniProtKB"/>
</dbReference>
<dbReference type="GO" id="GO:0052848">
    <property type="term" value="F:inositol-3,5-bisdiphosphate-2,3,4,6-tetrakisphosphate 5-diphosphatase activity"/>
    <property type="evidence" value="ECO:0007669"/>
    <property type="project" value="RHEA"/>
</dbReference>
<dbReference type="GO" id="GO:0052845">
    <property type="term" value="F:inositol-5-diphosphate-1,2,3,4,6-pentakisphosphate diphosphatase activity"/>
    <property type="evidence" value="ECO:0007669"/>
    <property type="project" value="RHEA"/>
</dbReference>
<dbReference type="GO" id="GO:0000287">
    <property type="term" value="F:magnesium ion binding"/>
    <property type="evidence" value="ECO:0000250"/>
    <property type="project" value="UniProtKB"/>
</dbReference>
<dbReference type="GO" id="GO:0030145">
    <property type="term" value="F:manganese ion binding"/>
    <property type="evidence" value="ECO:0000250"/>
    <property type="project" value="UniProtKB"/>
</dbReference>
<dbReference type="GO" id="GO:0008270">
    <property type="term" value="F:zinc ion binding"/>
    <property type="evidence" value="ECO:0000250"/>
    <property type="project" value="UniProtKB"/>
</dbReference>
<dbReference type="GO" id="GO:1901909">
    <property type="term" value="P:diadenosine hexaphosphate catabolic process"/>
    <property type="evidence" value="ECO:0007669"/>
    <property type="project" value="Ensembl"/>
</dbReference>
<dbReference type="GO" id="GO:0071544">
    <property type="term" value="P:diphosphoinositol polyphosphate catabolic process"/>
    <property type="evidence" value="ECO:0000250"/>
    <property type="project" value="UniProtKB"/>
</dbReference>
<dbReference type="GO" id="GO:0110154">
    <property type="term" value="P:RNA decapping"/>
    <property type="evidence" value="ECO:0000314"/>
    <property type="project" value="UniProtKB"/>
</dbReference>
<dbReference type="CDD" id="cd04666">
    <property type="entry name" value="NUDIX_DIPP2_like_Nudt4"/>
    <property type="match status" value="1"/>
</dbReference>
<dbReference type="FunFam" id="3.90.79.10:FF:000002">
    <property type="entry name" value="diphosphoinositol polyphosphate phosphohydrolase 1"/>
    <property type="match status" value="1"/>
</dbReference>
<dbReference type="Gene3D" id="3.90.79.10">
    <property type="entry name" value="Nucleoside Triphosphate Pyrophosphohydrolase"/>
    <property type="match status" value="1"/>
</dbReference>
<dbReference type="InterPro" id="IPR047198">
    <property type="entry name" value="DDP-like_NUDIX"/>
</dbReference>
<dbReference type="InterPro" id="IPR015797">
    <property type="entry name" value="NUDIX_hydrolase-like_dom_sf"/>
</dbReference>
<dbReference type="InterPro" id="IPR020084">
    <property type="entry name" value="NUDIX_hydrolase_CS"/>
</dbReference>
<dbReference type="InterPro" id="IPR000086">
    <property type="entry name" value="NUDIX_hydrolase_dom"/>
</dbReference>
<dbReference type="PANTHER" id="PTHR12629">
    <property type="entry name" value="DIPHOSPHOINOSITOL POLYPHOSPHATE PHOSPHOHYDROLASE"/>
    <property type="match status" value="1"/>
</dbReference>
<dbReference type="PANTHER" id="PTHR12629:SF5">
    <property type="entry name" value="DIPHOSPHOINOSITOL POLYPHOSPHATE PHOSPHOHYDROLASE 1"/>
    <property type="match status" value="1"/>
</dbReference>
<dbReference type="Pfam" id="PF00293">
    <property type="entry name" value="NUDIX"/>
    <property type="match status" value="1"/>
</dbReference>
<dbReference type="SUPFAM" id="SSF55811">
    <property type="entry name" value="Nudix"/>
    <property type="match status" value="1"/>
</dbReference>
<dbReference type="PROSITE" id="PS51462">
    <property type="entry name" value="NUDIX"/>
    <property type="match status" value="1"/>
</dbReference>
<dbReference type="PROSITE" id="PS00893">
    <property type="entry name" value="NUDIX_BOX"/>
    <property type="match status" value="1"/>
</dbReference>
<name>NUDT3_MOUSE</name>
<keyword id="KW-0007">Acetylation</keyword>
<keyword id="KW-0963">Cytoplasm</keyword>
<keyword id="KW-0378">Hydrolase</keyword>
<keyword id="KW-0460">Magnesium</keyword>
<keyword id="KW-0479">Metal-binding</keyword>
<keyword id="KW-0539">Nucleus</keyword>
<keyword id="KW-1185">Reference proteome</keyword>
<sequence length="168" mass="19030">MMKLKSNQTRTYDGDGYKKRAACLCFRSESEEEVLLVSSSRHPDRWIVPGGGMEPEEEPSVAAVREVCEEAGVKGTLGRLVGIFENQERKHRTYVYVLIVTEVLEDWEDSVNIGRKREWFKIEDAIKVLQCHKPVQASYFETLRQGYPANNGTPVVPTTYSSSVSGIR</sequence>
<feature type="chain" id="PRO_0000057056" description="Diphosphoinositol polyphosphate phosphohydrolase 1">
    <location>
        <begin position="1"/>
        <end position="168"/>
    </location>
</feature>
<feature type="domain" description="Nudix hydrolase" evidence="4">
    <location>
        <begin position="17"/>
        <end position="144"/>
    </location>
</feature>
<feature type="short sequence motif" description="Nudix box">
    <location>
        <begin position="51"/>
        <end position="72"/>
    </location>
</feature>
<feature type="active site" description="Proton acceptor" evidence="1">
    <location>
        <position position="69"/>
    </location>
</feature>
<feature type="binding site" evidence="2">
    <location>
        <position position="10"/>
    </location>
    <ligand>
        <name>substrate</name>
    </ligand>
</feature>
<feature type="binding site" evidence="2">
    <location>
        <begin position="18"/>
        <end position="20"/>
    </location>
    <ligand>
        <name>substrate</name>
    </ligand>
</feature>
<feature type="binding site" evidence="2">
    <location>
        <begin position="39"/>
        <end position="41"/>
    </location>
    <ligand>
        <name>substrate</name>
    </ligand>
</feature>
<feature type="binding site" evidence="2">
    <location>
        <position position="50"/>
    </location>
    <ligand>
        <name>Mg(2+)</name>
        <dbReference type="ChEBI" id="CHEBI:18420"/>
        <label>1</label>
    </ligand>
</feature>
<feature type="binding site" evidence="2">
    <location>
        <position position="66"/>
    </location>
    <ligand>
        <name>Mg(2+)</name>
        <dbReference type="ChEBI" id="CHEBI:18420"/>
        <label>2</label>
    </ligand>
</feature>
<feature type="binding site" evidence="2">
    <location>
        <position position="66"/>
    </location>
    <ligand>
        <name>Mg(2+)</name>
        <dbReference type="ChEBI" id="CHEBI:18420"/>
        <label>3</label>
    </ligand>
</feature>
<feature type="binding site" evidence="2">
    <location>
        <position position="70"/>
    </location>
    <ligand>
        <name>Mg(2+)</name>
        <dbReference type="ChEBI" id="CHEBI:18420"/>
        <label>1</label>
    </ligand>
</feature>
<feature type="binding site" evidence="2">
    <location>
        <begin position="89"/>
        <end position="91"/>
    </location>
    <ligand>
        <name>substrate</name>
    </ligand>
</feature>
<feature type="binding site" evidence="2">
    <location>
        <position position="115"/>
    </location>
    <ligand>
        <name>substrate</name>
    </ligand>
</feature>
<feature type="binding site" evidence="2">
    <location>
        <position position="133"/>
    </location>
    <ligand>
        <name>substrate</name>
    </ligand>
</feature>
<feature type="modified residue" description="N-acetylmethionine" evidence="2">
    <location>
        <position position="1"/>
    </location>
</feature>
<feature type="mutagenesis site" description="Loss of diphosphoinositol polyphosphate phosphohydrolase activity, but retains ability to regulate the ERK1/2 pathway." evidence="5">
    <original>E</original>
    <variation>Q</variation>
    <location>
        <position position="70"/>
    </location>
</feature>
<comment type="function">
    <text evidence="2 5 6">Cleaves a beta-phosphate from the diphosphate groups in PP-InsP5 (diphosphoinositol pentakisphosphate) and [PP]2-InsP4 (bisdiphosphoinositol tetrakisphosphate), suggesting that it may play a role in signal transduction (PubMed:15212765). InsP6 (inositol hexakisphosphate) is not a substrate (By similarity). Also able to catalyze the hydrolysis of dinucleoside oligophosphates, with diadenosine 5',5'''-P1,P6-hexaphosphate (Ap6A) and diadenosine 5',5'''- P1,P5-pentaphosphate (Ap5A) being the preferred substrates (By similarity). The major reaction products are ADP and p4a from Ap6A and ADP and ATP from Ap5A (By similarity). Also able to hydrolyze 5- phosphoribose 1-diphosphate (By similarity). Acts as a negative regulator of the ERK1/2 pathway (PubMed:15212765). Acts as a decapping enzyme that can hydrolyze both monomethylated and unmethylated capped RNAs (PubMed:23353937). Hydrolyzes monomethylated capped RNA after both the alpha- and beta-phosphates generating m7GMP + ppRNA and m7GDP + pRNA (PubMed:23353937). Modulates the stability of a subset of mRNAs implicated in cell motility (By similarity). Divalent cations zinc, magnesium and manganese determine its substrate specificity (By similarity). Exhibits diphosphoinositol polyphosphate phosphohydrolase in the presence of magnesium ions, diadenosine hexaphosphate hydrolase activity in the presence of manganese ions and endopolyphosphatase activity in the presence of zinc ions (By similarity). Plays an important role in limiting DNA damage and maintaining cell survival upon oxidative stress via its endopolyphosphatase activity (By similarity).</text>
</comment>
<comment type="catalytic activity">
    <reaction evidence="5">
        <text>diphospho-myo-inositol polyphosphate + H2O = myo-inositol polyphosphate + phosphate.</text>
        <dbReference type="EC" id="3.6.1.52"/>
    </reaction>
</comment>
<comment type="catalytic activity">
    <reaction evidence="5">
        <text>5-diphospho-1D-myo-inositol 1,2,3,4,6-pentakisphosphate + H2O = 1D-myo-inositol hexakisphosphate + phosphate + H(+)</text>
        <dbReference type="Rhea" id="RHEA:22384"/>
        <dbReference type="ChEBI" id="CHEBI:15377"/>
        <dbReference type="ChEBI" id="CHEBI:15378"/>
        <dbReference type="ChEBI" id="CHEBI:43474"/>
        <dbReference type="ChEBI" id="CHEBI:58130"/>
        <dbReference type="ChEBI" id="CHEBI:58628"/>
        <dbReference type="EC" id="3.6.1.52"/>
    </reaction>
</comment>
<comment type="catalytic activity">
    <reaction evidence="2">
        <text>3,5-bis(diphospho)-1D-myo-inositol 1,2,4,6-tetrakisphosphate + H2O = 3-diphospho-1D-myo-inositol 1,2,4,5,6-pentakisphosphate + phosphate + 2 H(+)</text>
        <dbReference type="Rhea" id="RHEA:56312"/>
        <dbReference type="ChEBI" id="CHEBI:15377"/>
        <dbReference type="ChEBI" id="CHEBI:15378"/>
        <dbReference type="ChEBI" id="CHEBI:43474"/>
        <dbReference type="ChEBI" id="CHEBI:140372"/>
        <dbReference type="ChEBI" id="CHEBI:140374"/>
        <dbReference type="EC" id="3.6.1.52"/>
    </reaction>
</comment>
<comment type="catalytic activity">
    <reaction evidence="2">
        <text>[phosphate](n+1) + n H2O = (n+1) phosphate + n H(+)</text>
        <dbReference type="Rhea" id="RHEA:22452"/>
        <dbReference type="Rhea" id="RHEA-COMP:14280"/>
        <dbReference type="ChEBI" id="CHEBI:15377"/>
        <dbReference type="ChEBI" id="CHEBI:15378"/>
        <dbReference type="ChEBI" id="CHEBI:16838"/>
        <dbReference type="ChEBI" id="CHEBI:43474"/>
        <dbReference type="EC" id="3.6.1.10"/>
    </reaction>
</comment>
<comment type="catalytic activity">
    <reaction evidence="2">
        <text>P(1),P(5)-bis(5'-adenosyl) pentaphosphate + H2O = ADP + ATP + 2 H(+)</text>
        <dbReference type="Rhea" id="RHEA:30527"/>
        <dbReference type="ChEBI" id="CHEBI:15377"/>
        <dbReference type="ChEBI" id="CHEBI:15378"/>
        <dbReference type="ChEBI" id="CHEBI:30616"/>
        <dbReference type="ChEBI" id="CHEBI:62041"/>
        <dbReference type="ChEBI" id="CHEBI:456216"/>
        <dbReference type="EC" id="3.6.1.61"/>
    </reaction>
</comment>
<comment type="catalytic activity">
    <reaction evidence="2">
        <text>P(1),P(6)-bis(5'-adenosyl) hexaphosphate + H2O = 2 ATP + 2 H(+)</text>
        <dbReference type="Rhea" id="RHEA:32043"/>
        <dbReference type="ChEBI" id="CHEBI:15377"/>
        <dbReference type="ChEBI" id="CHEBI:15378"/>
        <dbReference type="ChEBI" id="CHEBI:30616"/>
        <dbReference type="ChEBI" id="CHEBI:63740"/>
        <dbReference type="EC" id="3.6.1.61"/>
    </reaction>
</comment>
<comment type="catalytic activity">
    <reaction evidence="2">
        <text>P(1),P(4)-bis(5'-adenosyl) tetraphosphate + H2O = AMP + ATP + 2 H(+)</text>
        <dbReference type="Rhea" id="RHEA:32039"/>
        <dbReference type="ChEBI" id="CHEBI:15377"/>
        <dbReference type="ChEBI" id="CHEBI:15378"/>
        <dbReference type="ChEBI" id="CHEBI:30616"/>
        <dbReference type="ChEBI" id="CHEBI:58141"/>
        <dbReference type="ChEBI" id="CHEBI:456215"/>
        <dbReference type="EC" id="3.6.1.61"/>
    </reaction>
</comment>
<comment type="catalytic activity">
    <reaction evidence="6">
        <text>a 5'-end (N(7)-methyl 5'-triphosphoguanosine)-ribonucleoside in mRNA + H2O = N(7)-methyl-GMP + a 5'-end diphospho-ribonucleoside in mRNA + 2 H(+)</text>
        <dbReference type="Rhea" id="RHEA:65388"/>
        <dbReference type="Rhea" id="RHEA-COMP:17165"/>
        <dbReference type="Rhea" id="RHEA-COMP:17167"/>
        <dbReference type="ChEBI" id="CHEBI:15377"/>
        <dbReference type="ChEBI" id="CHEBI:15378"/>
        <dbReference type="ChEBI" id="CHEBI:58285"/>
        <dbReference type="ChEBI" id="CHEBI:156461"/>
        <dbReference type="ChEBI" id="CHEBI:167616"/>
        <dbReference type="EC" id="3.6.1.59"/>
    </reaction>
</comment>
<comment type="catalytic activity">
    <reaction evidence="6">
        <text>a 5'-end (N(7)-methyl 5'-triphosphoguanosine)-ribonucleoside in mRNA + H2O = N(7)-methyl-GDP + a 5'-end phospho-ribonucleoside in mRNA + 2 H(+)</text>
        <dbReference type="Rhea" id="RHEA:67484"/>
        <dbReference type="Rhea" id="RHEA-COMP:15692"/>
        <dbReference type="Rhea" id="RHEA-COMP:17167"/>
        <dbReference type="ChEBI" id="CHEBI:15377"/>
        <dbReference type="ChEBI" id="CHEBI:15378"/>
        <dbReference type="ChEBI" id="CHEBI:63714"/>
        <dbReference type="ChEBI" id="CHEBI:138282"/>
        <dbReference type="ChEBI" id="CHEBI:156461"/>
        <dbReference type="EC" id="3.6.1.62"/>
    </reaction>
</comment>
<comment type="cofactor">
    <cofactor evidence="2">
        <name>Mg(2+)</name>
        <dbReference type="ChEBI" id="CHEBI:18420"/>
    </cofactor>
    <cofactor evidence="2">
        <name>Mn(2+)</name>
        <dbReference type="ChEBI" id="CHEBI:29035"/>
    </cofactor>
    <cofactor evidence="2">
        <name>Zn(2+)</name>
        <dbReference type="ChEBI" id="CHEBI:29105"/>
    </cofactor>
    <text evidence="2">Binds 3 Mg(2+) ions per subunit.</text>
</comment>
<comment type="subunit">
    <text evidence="3">Monomer.</text>
</comment>
<comment type="subcellular location">
    <subcellularLocation>
        <location evidence="2">Cytoplasm</location>
    </subcellularLocation>
    <subcellularLocation>
        <location evidence="2">Nucleus</location>
    </subcellularLocation>
</comment>
<comment type="tissue specificity">
    <text evidence="5">Present in heart, lung, liver and spleen (at protein level). Widely expressed.</text>
</comment>
<comment type="similarity">
    <text evidence="7">Belongs to the Nudix hydrolase family. DIPP subfamily.</text>
</comment>
<comment type="sequence caution" evidence="7">
    <conflict type="miscellaneous discrepancy">
        <sequence resource="EMBL-CDS" id="AAH57331"/>
    </conflict>
    <text>Chimeric at the C-terminus.</text>
</comment>